<name>MTUS1_HUMAN</name>
<comment type="function">
    <text evidence="7 15">Cooperates with AGTR2 to inhibit ERK2 activation and cell proliferation. May be required for AGTR2 cell surface expression. Together with PTPN6, induces UBE2V2 expression upon angiotensin-II stimulation. Isoform 1 inhibits breast cancer cell proliferation, delays the progression of mitosis by prolonging metaphase and reduces tumor growth.</text>
</comment>
<comment type="subunit">
    <text evidence="1 8">Homodimer. Interacts with AGTR2. Interacts with PTPN6 (By similarity). Isoform 1 associates with microtubules.</text>
</comment>
<comment type="interaction">
    <interactant intactId="EBI-18051665">
        <id>Q9ULD2-3</id>
    </interactant>
    <interactant intactId="EBI-466029">
        <id>P42858</id>
        <label>HTT</label>
    </interactant>
    <organismsDiffer>false</organismsDiffer>
    <experiments>3</experiments>
</comment>
<comment type="interaction">
    <interactant intactId="EBI-18051665">
        <id>Q9ULD2-3</id>
    </interactant>
    <interactant intactId="EBI-307486">
        <id>P63208</id>
        <label>SKP1</label>
    </interactant>
    <organismsDiffer>false</organismsDiffer>
    <experiments>3</experiments>
</comment>
<comment type="interaction">
    <interactant intactId="EBI-18051665">
        <id>Q9ULD2-3</id>
    </interactant>
    <interactant intactId="EBI-714206">
        <id>Q13190</id>
        <label>STX5</label>
    </interactant>
    <organismsDiffer>false</organismsDiffer>
    <experiments>3</experiments>
</comment>
<comment type="interaction">
    <interactant intactId="EBI-18051665">
        <id>Q9ULD2-3</id>
    </interactant>
    <interactant intactId="EBI-3221827">
        <id>O15400</id>
        <label>STX7</label>
    </interactant>
    <organismsDiffer>false</organismsDiffer>
    <experiments>3</experiments>
</comment>
<comment type="interaction">
    <interactant intactId="EBI-25866497">
        <id>Q9ULD2-4</id>
    </interactant>
    <interactant intactId="EBI-466029">
        <id>P42858</id>
        <label>HTT</label>
    </interactant>
    <organismsDiffer>false</organismsDiffer>
    <experiments>9</experiments>
</comment>
<comment type="subcellular location">
    <subcellularLocation>
        <location evidence="6 7 15">Mitochondrion</location>
    </subcellularLocation>
    <subcellularLocation>
        <location evidence="1">Golgi apparatus</location>
    </subcellularLocation>
    <subcellularLocation>
        <location evidence="1">Cell membrane</location>
    </subcellularLocation>
    <subcellularLocation>
        <location evidence="1">Nucleus</location>
    </subcellularLocation>
    <text evidence="1">In neurons, translocates into the nucleus after treatment with angiotensin-II.</text>
</comment>
<comment type="subcellular location">
    <molecule>Isoform 1</molecule>
    <subcellularLocation>
        <location>Cytoplasm</location>
        <location>Cytoskeleton</location>
        <location>Microtubule organizing center</location>
        <location>Centrosome</location>
    </subcellularLocation>
    <subcellularLocation>
        <location>Cytoplasm</location>
        <location>Cytoskeleton</location>
        <location>Spindle</location>
    </subcellularLocation>
    <text>Localizes with the mitotic spindle during mitosis and with the intercellular bridge during cytokinesis.</text>
</comment>
<comment type="alternative products">
    <event type="alternative splicing"/>
    <isoform>
        <id>Q9ULD2-1</id>
        <name>1</name>
        <name>ATIP3a</name>
        <sequence type="displayed"/>
    </isoform>
    <isoform>
        <id>Q9ULD2-2</id>
        <name>2</name>
        <name>ATIP3b</name>
        <sequence type="described" ref="VSP_028274"/>
    </isoform>
    <isoform>
        <id>Q9ULD2-3</id>
        <name>3</name>
        <name>ATIP1</name>
        <sequence type="described" ref="VSP_028271 VSP_028277"/>
    </isoform>
    <isoform>
        <id>Q9ULD2-4</id>
        <name>4</name>
        <sequence type="described" ref="VSP_028270 VSP_028278"/>
    </isoform>
    <isoform>
        <id>Q9ULD2-5</id>
        <name>5</name>
        <name>ATIP2</name>
        <sequence type="described" ref="VSP_028275 VSP_028276"/>
    </isoform>
    <isoform>
        <id>Q9ULD2-6</id>
        <name>6</name>
        <name>ATIP4</name>
        <sequence type="described" ref="VSP_028272 VSP_028273"/>
    </isoform>
    <isoform>
        <id>Q9ULD2-7</id>
        <name>7</name>
        <sequence type="described" ref="VSP_044849"/>
    </isoform>
</comment>
<comment type="tissue specificity">
    <text evidence="6 7 8 10 12 13 14">Ubiquitously expressed (at protein level). Highly expressed in brain. Down-regulated in ovarian carcinoma, pancreas carcinoma, colon carcinoma and head and neck squamous cell carcinoma (HNSCC). Isoform 1 is the major isoform in most peripheral tissues. Isoform 2 is abundant in most peripheral tissues. Isoform 3 is the major isoform in brain, female reproductive tissues, thyroid and heart. Within brain it is highly expressed in corpus callosum and pons. Isoform 6 is brain-specific, it is the major isoform in cerebellum and fetal brain.</text>
</comment>
<comment type="induction">
    <molecule>Isoform 1</molecule>
    <text evidence="15">Down-regulated in invasive breast carcinomas (at protein level).</text>
</comment>
<comment type="disease" evidence="11">
    <disease id="DI-01708">
        <name>Hepatocellular carcinoma</name>
        <acronym>HCC</acronym>
        <description>A primary malignant neoplasm of epithelial liver cells. The major risk factors for HCC are chronic hepatitis B virus (HBV) infection, chronic hepatitis C virus (HCV) infection, prolonged dietary aflatoxin exposure, alcoholic cirrhosis, and cirrhosis due to other causes.</description>
        <dbReference type="MIM" id="114550"/>
    </disease>
    <text>The gene represented in this entry may be involved in disease pathogenesis.</text>
</comment>
<comment type="miscellaneous">
    <molecule>Isoform 5</molecule>
    <text evidence="24">Expressed at very low levels in most tissues.</text>
</comment>
<comment type="similarity">
    <text evidence="24">Belongs to the MTUS1 family.</text>
</comment>
<comment type="sequence caution" evidence="24">
    <conflict type="miscellaneous discrepancy">
        <sequence resource="EMBL-CDS" id="AAH07328"/>
    </conflict>
    <text>Contaminating sequence. Potential poly-A sequence.</text>
</comment>
<comment type="sequence caution" evidence="24">
    <conflict type="erroneous initiation">
        <sequence resource="EMBL-CDS" id="AAH33842"/>
    </conflict>
</comment>
<comment type="sequence caution" evidence="24">
    <conflict type="erroneous initiation">
        <sequence resource="EMBL-CDS" id="BAB14894"/>
    </conflict>
</comment>
<comment type="online information" name="Atlas of Genetics and Cytogenetics in Oncology and Haematology">
    <link uri="https://atlasgeneticsoncology.org/gene/41451/MTUS1"/>
</comment>
<evidence type="ECO:0000250" key="1"/>
<evidence type="ECO:0000250" key="2">
    <source>
        <dbReference type="UniProtKB" id="Q5HZI1"/>
    </source>
</evidence>
<evidence type="ECO:0000250" key="3">
    <source>
        <dbReference type="UniProtKB" id="Q6IMY1"/>
    </source>
</evidence>
<evidence type="ECO:0000255" key="4"/>
<evidence type="ECO:0000256" key="5">
    <source>
        <dbReference type="SAM" id="MobiDB-lite"/>
    </source>
</evidence>
<evidence type="ECO:0000269" key="6">
    <source>
    </source>
</evidence>
<evidence type="ECO:0000269" key="7">
    <source>
    </source>
</evidence>
<evidence type="ECO:0000269" key="8">
    <source>
    </source>
</evidence>
<evidence type="ECO:0000269" key="9">
    <source>
    </source>
</evidence>
<evidence type="ECO:0000269" key="10">
    <source>
    </source>
</evidence>
<evidence type="ECO:0000269" key="11">
    <source>
    </source>
</evidence>
<evidence type="ECO:0000269" key="12">
    <source>
    </source>
</evidence>
<evidence type="ECO:0000269" key="13">
    <source>
    </source>
</evidence>
<evidence type="ECO:0000269" key="14">
    <source>
    </source>
</evidence>
<evidence type="ECO:0000269" key="15">
    <source>
    </source>
</evidence>
<evidence type="ECO:0000269" key="16">
    <source ref="7"/>
</evidence>
<evidence type="ECO:0000269" key="17">
    <source ref="9"/>
</evidence>
<evidence type="ECO:0000303" key="18">
    <source>
    </source>
</evidence>
<evidence type="ECO:0000303" key="19">
    <source>
    </source>
</evidence>
<evidence type="ECO:0000303" key="20">
    <source>
    </source>
</evidence>
<evidence type="ECO:0000303" key="21">
    <source>
    </source>
</evidence>
<evidence type="ECO:0000303" key="22">
    <source>
    </source>
</evidence>
<evidence type="ECO:0000303" key="23">
    <source ref="9"/>
</evidence>
<evidence type="ECO:0000305" key="24"/>
<evidence type="ECO:0007744" key="25">
    <source>
    </source>
</evidence>
<evidence type="ECO:0007744" key="26">
    <source>
    </source>
</evidence>
<evidence type="ECO:0007744" key="27">
    <source>
    </source>
</evidence>
<evidence type="ECO:0007744" key="28">
    <source>
    </source>
</evidence>
<organism>
    <name type="scientific">Homo sapiens</name>
    <name type="common">Human</name>
    <dbReference type="NCBI Taxonomy" id="9606"/>
    <lineage>
        <taxon>Eukaryota</taxon>
        <taxon>Metazoa</taxon>
        <taxon>Chordata</taxon>
        <taxon>Craniata</taxon>
        <taxon>Vertebrata</taxon>
        <taxon>Euteleostomi</taxon>
        <taxon>Mammalia</taxon>
        <taxon>Eutheria</taxon>
        <taxon>Euarchontoglires</taxon>
        <taxon>Primates</taxon>
        <taxon>Haplorrhini</taxon>
        <taxon>Catarrhini</taxon>
        <taxon>Hominidae</taxon>
        <taxon>Homo</taxon>
    </lineage>
</organism>
<keyword id="KW-0025">Alternative splicing</keyword>
<keyword id="KW-1003">Cell membrane</keyword>
<keyword id="KW-0175">Coiled coil</keyword>
<keyword id="KW-0963">Cytoplasm</keyword>
<keyword id="KW-0206">Cytoskeleton</keyword>
<keyword id="KW-0225">Disease variant</keyword>
<keyword id="KW-0333">Golgi apparatus</keyword>
<keyword id="KW-0472">Membrane</keyword>
<keyword id="KW-0493">Microtubule</keyword>
<keyword id="KW-0496">Mitochondrion</keyword>
<keyword id="KW-0539">Nucleus</keyword>
<keyword id="KW-0597">Phosphoprotein</keyword>
<keyword id="KW-1267">Proteomics identification</keyword>
<keyword id="KW-1185">Reference proteome</keyword>
<keyword id="KW-0043">Tumor suppressor</keyword>
<dbReference type="EMBL" id="AF121259">
    <property type="protein sequence ID" value="AAG33674.1"/>
    <property type="molecule type" value="mRNA"/>
</dbReference>
<dbReference type="EMBL" id="AF293357">
    <property type="protein sequence ID" value="AAL37035.1"/>
    <property type="molecule type" value="mRNA"/>
</dbReference>
<dbReference type="EMBL" id="AK024357">
    <property type="protein sequence ID" value="BAB14894.1"/>
    <property type="status" value="ALT_INIT"/>
    <property type="molecule type" value="mRNA"/>
</dbReference>
<dbReference type="EMBL" id="AK125188">
    <property type="protein sequence ID" value="BAG54161.1"/>
    <property type="molecule type" value="mRNA"/>
</dbReference>
<dbReference type="EMBL" id="AK289750">
    <property type="protein sequence ID" value="BAF82439.1"/>
    <property type="molecule type" value="mRNA"/>
</dbReference>
<dbReference type="EMBL" id="AK294860">
    <property type="protein sequence ID" value="BAG57964.1"/>
    <property type="molecule type" value="mRNA"/>
</dbReference>
<dbReference type="EMBL" id="AK314692">
    <property type="protein sequence ID" value="BAG37243.1"/>
    <property type="molecule type" value="mRNA"/>
</dbReference>
<dbReference type="EMBL" id="AL096842">
    <property type="protein sequence ID" value="CAB50791.1"/>
    <property type="molecule type" value="mRNA"/>
</dbReference>
<dbReference type="EMBL" id="BX648879">
    <property type="protein sequence ID" value="CAH56128.1"/>
    <property type="molecule type" value="mRNA"/>
</dbReference>
<dbReference type="EMBL" id="AC027117">
    <property type="status" value="NOT_ANNOTATED_CDS"/>
    <property type="molecule type" value="Genomic_DNA"/>
</dbReference>
<dbReference type="EMBL" id="AC124069">
    <property type="status" value="NOT_ANNOTATED_CDS"/>
    <property type="molecule type" value="Genomic_DNA"/>
</dbReference>
<dbReference type="EMBL" id="CH471080">
    <property type="protein sequence ID" value="EAW63804.1"/>
    <property type="molecule type" value="Genomic_DNA"/>
</dbReference>
<dbReference type="EMBL" id="CH471080">
    <property type="protein sequence ID" value="EAW63805.1"/>
    <property type="molecule type" value="Genomic_DNA"/>
</dbReference>
<dbReference type="EMBL" id="CH471080">
    <property type="protein sequence ID" value="EAW63810.1"/>
    <property type="molecule type" value="Genomic_DNA"/>
</dbReference>
<dbReference type="EMBL" id="BC007328">
    <property type="protein sequence ID" value="AAH07328.1"/>
    <property type="status" value="ALT_SEQ"/>
    <property type="molecule type" value="mRNA"/>
</dbReference>
<dbReference type="EMBL" id="BC033842">
    <property type="protein sequence ID" value="AAH33842.1"/>
    <property type="status" value="ALT_INIT"/>
    <property type="molecule type" value="mRNA"/>
</dbReference>
<dbReference type="EMBL" id="BC136320">
    <property type="protein sequence ID" value="AAI36321.1"/>
    <property type="molecule type" value="mRNA"/>
</dbReference>
<dbReference type="EMBL" id="BC142971">
    <property type="protein sequence ID" value="AAI42972.1"/>
    <property type="molecule type" value="mRNA"/>
</dbReference>
<dbReference type="EMBL" id="AY363099">
    <property type="protein sequence ID" value="AAQ24172.1"/>
    <property type="molecule type" value="mRNA"/>
</dbReference>
<dbReference type="EMBL" id="AB033114">
    <property type="protein sequence ID" value="BAA86602.1"/>
    <property type="molecule type" value="mRNA"/>
</dbReference>
<dbReference type="CCDS" id="CCDS43716.1">
    <molecule id="Q9ULD2-2"/>
</dbReference>
<dbReference type="CCDS" id="CCDS43717.1">
    <molecule id="Q9ULD2-1"/>
</dbReference>
<dbReference type="CCDS" id="CCDS43718.1">
    <molecule id="Q9ULD2-6"/>
</dbReference>
<dbReference type="CCDS" id="CCDS43719.1">
    <molecule id="Q9ULD2-3"/>
</dbReference>
<dbReference type="CCDS" id="CCDS55204.1">
    <molecule id="Q9ULD2-7"/>
</dbReference>
<dbReference type="CCDS" id="CCDS83254.1">
    <molecule id="Q9ULD2-4"/>
</dbReference>
<dbReference type="RefSeq" id="NP_001001924.1">
    <molecule id="Q9ULD2-1"/>
    <property type="nucleotide sequence ID" value="NM_001001924.3"/>
</dbReference>
<dbReference type="RefSeq" id="NP_001001925.1">
    <molecule id="Q9ULD2-2"/>
    <property type="nucleotide sequence ID" value="NM_001001925.3"/>
</dbReference>
<dbReference type="RefSeq" id="NP_001001931.1">
    <molecule id="Q9ULD2-6"/>
    <property type="nucleotide sequence ID" value="NM_001001931.3"/>
</dbReference>
<dbReference type="RefSeq" id="NP_001159865.1">
    <molecule id="Q9ULD2-7"/>
    <property type="nucleotide sequence ID" value="NM_001166393.2"/>
</dbReference>
<dbReference type="RefSeq" id="NP_001317399.1">
    <molecule id="Q9ULD2-4"/>
    <property type="nucleotide sequence ID" value="NM_001330470.2"/>
</dbReference>
<dbReference type="RefSeq" id="NP_001349987.1">
    <molecule id="Q9ULD2-1"/>
    <property type="nucleotide sequence ID" value="NM_001363058.2"/>
</dbReference>
<dbReference type="RefSeq" id="NP_001349988.1">
    <molecule id="Q9ULD2-1"/>
    <property type="nucleotide sequence ID" value="NM_001363059.2"/>
</dbReference>
<dbReference type="RefSeq" id="NP_001349990.1">
    <molecule id="Q9ULD2-1"/>
    <property type="nucleotide sequence ID" value="NM_001363061.2"/>
</dbReference>
<dbReference type="RefSeq" id="NP_001349991.1">
    <molecule id="Q9ULD2-2"/>
    <property type="nucleotide sequence ID" value="NM_001363062.2"/>
</dbReference>
<dbReference type="RefSeq" id="NP_065800.1">
    <molecule id="Q9ULD2-3"/>
    <property type="nucleotide sequence ID" value="NM_020749.5"/>
</dbReference>
<dbReference type="RefSeq" id="XP_005273636.1">
    <property type="nucleotide sequence ID" value="XM_005273579.3"/>
</dbReference>
<dbReference type="RefSeq" id="XP_005273639.1">
    <property type="nucleotide sequence ID" value="XM_005273582.3"/>
</dbReference>
<dbReference type="RefSeq" id="XP_016869189.1">
    <property type="nucleotide sequence ID" value="XM_017013700.1"/>
</dbReference>
<dbReference type="RefSeq" id="XP_016869190.1">
    <property type="nucleotide sequence ID" value="XM_017013701.1"/>
</dbReference>
<dbReference type="RefSeq" id="XP_016869191.1">
    <property type="nucleotide sequence ID" value="XM_017013702.1"/>
</dbReference>
<dbReference type="SMR" id="Q9ULD2"/>
<dbReference type="BioGRID" id="121573">
    <property type="interactions" value="129"/>
</dbReference>
<dbReference type="FunCoup" id="Q9ULD2">
    <property type="interactions" value="1485"/>
</dbReference>
<dbReference type="IntAct" id="Q9ULD2">
    <property type="interactions" value="59"/>
</dbReference>
<dbReference type="MINT" id="Q9ULD2"/>
<dbReference type="STRING" id="9606.ENSP00000262102"/>
<dbReference type="GlyGen" id="Q9ULD2">
    <property type="glycosylation" value="2 sites, 1 N-linked glycan (1 site)"/>
</dbReference>
<dbReference type="iPTMnet" id="Q9ULD2"/>
<dbReference type="MetOSite" id="Q9ULD2"/>
<dbReference type="PhosphoSitePlus" id="Q9ULD2"/>
<dbReference type="SwissPalm" id="Q9ULD2"/>
<dbReference type="BioMuta" id="MTUS1"/>
<dbReference type="DMDM" id="158706128"/>
<dbReference type="jPOST" id="Q9ULD2"/>
<dbReference type="MassIVE" id="Q9ULD2"/>
<dbReference type="PaxDb" id="9606-ENSP00000262102"/>
<dbReference type="PeptideAtlas" id="Q9ULD2"/>
<dbReference type="ProteomicsDB" id="4177"/>
<dbReference type="ProteomicsDB" id="84989">
    <molecule id="Q9ULD2-1"/>
</dbReference>
<dbReference type="ProteomicsDB" id="84990">
    <molecule id="Q9ULD2-2"/>
</dbReference>
<dbReference type="ProteomicsDB" id="84991">
    <molecule id="Q9ULD2-3"/>
</dbReference>
<dbReference type="ProteomicsDB" id="84992">
    <molecule id="Q9ULD2-4"/>
</dbReference>
<dbReference type="ProteomicsDB" id="84993">
    <molecule id="Q9ULD2-5"/>
</dbReference>
<dbReference type="ProteomicsDB" id="84994">
    <molecule id="Q9ULD2-6"/>
</dbReference>
<dbReference type="Pumba" id="Q9ULD2"/>
<dbReference type="Antibodypedia" id="5109">
    <property type="antibodies" value="226 antibodies from 29 providers"/>
</dbReference>
<dbReference type="DNASU" id="57509"/>
<dbReference type="Ensembl" id="ENST00000262102.10">
    <molecule id="Q9ULD2-1"/>
    <property type="protein sequence ID" value="ENSP00000262102.6"/>
    <property type="gene ID" value="ENSG00000129422.15"/>
</dbReference>
<dbReference type="Ensembl" id="ENST00000297488.10">
    <molecule id="Q9ULD2-3"/>
    <property type="protein sequence ID" value="ENSP00000297488.6"/>
    <property type="gene ID" value="ENSG00000129422.15"/>
</dbReference>
<dbReference type="Ensembl" id="ENST00000381861.7">
    <molecule id="Q9ULD2-6"/>
    <property type="protein sequence ID" value="ENSP00000371285.3"/>
    <property type="gene ID" value="ENSG00000129422.15"/>
</dbReference>
<dbReference type="Ensembl" id="ENST00000381869.5">
    <molecule id="Q9ULD2-2"/>
    <property type="protein sequence ID" value="ENSP00000371293.3"/>
    <property type="gene ID" value="ENSG00000129422.15"/>
</dbReference>
<dbReference type="Ensembl" id="ENST00000519263.5">
    <molecule id="Q9ULD2-2"/>
    <property type="protein sequence ID" value="ENSP00000430167.1"/>
    <property type="gene ID" value="ENSG00000129422.15"/>
</dbReference>
<dbReference type="Ensembl" id="ENST00000544260.3">
    <molecule id="Q9ULD2-7"/>
    <property type="protein sequence ID" value="ENSP00000445738.1"/>
    <property type="gene ID" value="ENSG00000129422.15"/>
</dbReference>
<dbReference type="Ensembl" id="ENST00000634613.1">
    <molecule id="Q9ULD2-4"/>
    <property type="protein sequence ID" value="ENSP00000489288.1"/>
    <property type="gene ID" value="ENSG00000129422.15"/>
</dbReference>
<dbReference type="Ensembl" id="ENST00000693296.1">
    <molecule id="Q9ULD2-1"/>
    <property type="protein sequence ID" value="ENSP00000509719.1"/>
    <property type="gene ID" value="ENSG00000129422.15"/>
</dbReference>
<dbReference type="GeneID" id="57509"/>
<dbReference type="KEGG" id="hsa:57509"/>
<dbReference type="MANE-Select" id="ENST00000693296.1">
    <property type="protein sequence ID" value="ENSP00000509719.1"/>
    <property type="RefSeq nucleotide sequence ID" value="NM_001363059.2"/>
    <property type="RefSeq protein sequence ID" value="NP_001349988.1"/>
</dbReference>
<dbReference type="UCSC" id="uc003wxs.4">
    <molecule id="Q9ULD2-1"/>
    <property type="organism name" value="human"/>
</dbReference>
<dbReference type="AGR" id="HGNC:29789"/>
<dbReference type="CTD" id="57509"/>
<dbReference type="DisGeNET" id="57509"/>
<dbReference type="GeneCards" id="MTUS1"/>
<dbReference type="HGNC" id="HGNC:29789">
    <property type="gene designation" value="MTUS1"/>
</dbReference>
<dbReference type="HPA" id="ENSG00000129422">
    <property type="expression patterns" value="Low tissue specificity"/>
</dbReference>
<dbReference type="MalaCards" id="MTUS1"/>
<dbReference type="MIM" id="114550">
    <property type="type" value="phenotype"/>
</dbReference>
<dbReference type="MIM" id="609589">
    <property type="type" value="gene"/>
</dbReference>
<dbReference type="neXtProt" id="NX_Q9ULD2"/>
<dbReference type="OpenTargets" id="ENSG00000129422"/>
<dbReference type="PharmGKB" id="PA134968054"/>
<dbReference type="VEuPathDB" id="HostDB:ENSG00000129422"/>
<dbReference type="eggNOG" id="ENOG502QPVG">
    <property type="taxonomic scope" value="Eukaryota"/>
</dbReference>
<dbReference type="GeneTree" id="ENSGT00950000183026"/>
<dbReference type="HOGENOM" id="CLU_029786_1_0_1"/>
<dbReference type="InParanoid" id="Q9ULD2"/>
<dbReference type="OMA" id="SKDMLWS"/>
<dbReference type="OrthoDB" id="10038993at2759"/>
<dbReference type="PAN-GO" id="Q9ULD2">
    <property type="GO annotations" value="4 GO annotations based on evolutionary models"/>
</dbReference>
<dbReference type="PhylomeDB" id="Q9ULD2"/>
<dbReference type="TreeFam" id="TF333416"/>
<dbReference type="PathwayCommons" id="Q9ULD2"/>
<dbReference type="SignaLink" id="Q9ULD2"/>
<dbReference type="BioGRID-ORCS" id="57509">
    <property type="hits" value="15 hits in 1152 CRISPR screens"/>
</dbReference>
<dbReference type="CD-CODE" id="8C2F96ED">
    <property type="entry name" value="Centrosome"/>
</dbReference>
<dbReference type="ChiTaRS" id="MTUS1">
    <property type="organism name" value="human"/>
</dbReference>
<dbReference type="GeneWiki" id="MTUS1"/>
<dbReference type="GenomeRNAi" id="57509"/>
<dbReference type="Pharos" id="Q9ULD2">
    <property type="development level" value="Tbio"/>
</dbReference>
<dbReference type="PRO" id="PR:Q9ULD2"/>
<dbReference type="Proteomes" id="UP000005640">
    <property type="component" value="Chromosome 8"/>
</dbReference>
<dbReference type="RNAct" id="Q9ULD2">
    <property type="molecule type" value="protein"/>
</dbReference>
<dbReference type="Bgee" id="ENSG00000129422">
    <property type="expression patterns" value="Expressed in corpus callosum and 211 other cell types or tissues"/>
</dbReference>
<dbReference type="ExpressionAtlas" id="Q9ULD2">
    <property type="expression patterns" value="baseline and differential"/>
</dbReference>
<dbReference type="GO" id="GO:0005813">
    <property type="term" value="C:centrosome"/>
    <property type="evidence" value="ECO:0007669"/>
    <property type="project" value="UniProtKB-SubCell"/>
</dbReference>
<dbReference type="GO" id="GO:0005615">
    <property type="term" value="C:extracellular space"/>
    <property type="evidence" value="ECO:0007005"/>
    <property type="project" value="UniProtKB"/>
</dbReference>
<dbReference type="GO" id="GO:0005794">
    <property type="term" value="C:Golgi apparatus"/>
    <property type="evidence" value="ECO:0007669"/>
    <property type="project" value="UniProtKB-SubCell"/>
</dbReference>
<dbReference type="GO" id="GO:0005874">
    <property type="term" value="C:microtubule"/>
    <property type="evidence" value="ECO:0007669"/>
    <property type="project" value="UniProtKB-KW"/>
</dbReference>
<dbReference type="GO" id="GO:0015630">
    <property type="term" value="C:microtubule cytoskeleton"/>
    <property type="evidence" value="ECO:0000314"/>
    <property type="project" value="HPA"/>
</dbReference>
<dbReference type="GO" id="GO:0005739">
    <property type="term" value="C:mitochondrion"/>
    <property type="evidence" value="ECO:0007669"/>
    <property type="project" value="UniProtKB-SubCell"/>
</dbReference>
<dbReference type="GO" id="GO:0005730">
    <property type="term" value="C:nucleolus"/>
    <property type="evidence" value="ECO:0000314"/>
    <property type="project" value="HPA"/>
</dbReference>
<dbReference type="GO" id="GO:0005634">
    <property type="term" value="C:nucleus"/>
    <property type="evidence" value="ECO:0000318"/>
    <property type="project" value="GO_Central"/>
</dbReference>
<dbReference type="GO" id="GO:0005886">
    <property type="term" value="C:plasma membrane"/>
    <property type="evidence" value="ECO:0007669"/>
    <property type="project" value="UniProtKB-SubCell"/>
</dbReference>
<dbReference type="GO" id="GO:0005819">
    <property type="term" value="C:spindle"/>
    <property type="evidence" value="ECO:0007669"/>
    <property type="project" value="UniProtKB-SubCell"/>
</dbReference>
<dbReference type="GO" id="GO:0008017">
    <property type="term" value="F:microtubule binding"/>
    <property type="evidence" value="ECO:0000318"/>
    <property type="project" value="GO_Central"/>
</dbReference>
<dbReference type="GO" id="GO:0010758">
    <property type="term" value="P:regulation of macrophage chemotaxis"/>
    <property type="evidence" value="ECO:0000318"/>
    <property type="project" value="GO_Central"/>
</dbReference>
<dbReference type="InterPro" id="IPR051293">
    <property type="entry name" value="MTUS1/CCDC69"/>
</dbReference>
<dbReference type="PANTHER" id="PTHR24200:SF7">
    <property type="entry name" value="MICROTUBULE-ASSOCIATED TUMOR SUPPRESSOR 1"/>
    <property type="match status" value="1"/>
</dbReference>
<dbReference type="PANTHER" id="PTHR24200">
    <property type="entry name" value="TOUCAN, ISOFORM A"/>
    <property type="match status" value="1"/>
</dbReference>
<feature type="chain" id="PRO_0000305197" description="Microtubule-associated tumor suppressor 1">
    <location>
        <begin position="1"/>
        <end position="1270"/>
    </location>
</feature>
<feature type="region of interest" description="Disordered" evidence="5">
    <location>
        <begin position="1"/>
        <end position="50"/>
    </location>
</feature>
<feature type="region of interest" description="Disordered" evidence="5">
    <location>
        <begin position="184"/>
        <end position="236"/>
    </location>
</feature>
<feature type="region of interest" description="Disordered" evidence="5">
    <location>
        <begin position="524"/>
        <end position="560"/>
    </location>
</feature>
<feature type="region of interest" description="Disordered" evidence="5">
    <location>
        <begin position="592"/>
        <end position="622"/>
    </location>
</feature>
<feature type="region of interest" description="Disordered" evidence="5">
    <location>
        <begin position="701"/>
        <end position="815"/>
    </location>
</feature>
<feature type="region of interest" description="Disordered" evidence="5">
    <location>
        <begin position="1237"/>
        <end position="1270"/>
    </location>
</feature>
<feature type="coiled-coil region" evidence="4">
    <location>
        <begin position="940"/>
        <end position="1231"/>
    </location>
</feature>
<feature type="compositionally biased region" description="Acidic residues" evidence="5">
    <location>
        <begin position="1"/>
        <end position="14"/>
    </location>
</feature>
<feature type="compositionally biased region" description="Low complexity" evidence="5">
    <location>
        <begin position="38"/>
        <end position="50"/>
    </location>
</feature>
<feature type="compositionally biased region" description="Low complexity" evidence="5">
    <location>
        <begin position="197"/>
        <end position="211"/>
    </location>
</feature>
<feature type="compositionally biased region" description="Basic and acidic residues" evidence="5">
    <location>
        <begin position="212"/>
        <end position="228"/>
    </location>
</feature>
<feature type="compositionally biased region" description="Polar residues" evidence="5">
    <location>
        <begin position="533"/>
        <end position="556"/>
    </location>
</feature>
<feature type="compositionally biased region" description="Polar residues" evidence="5">
    <location>
        <begin position="701"/>
        <end position="710"/>
    </location>
</feature>
<feature type="compositionally biased region" description="Polar residues" evidence="5">
    <location>
        <begin position="759"/>
        <end position="776"/>
    </location>
</feature>
<feature type="compositionally biased region" description="Polar residues" evidence="5">
    <location>
        <begin position="797"/>
        <end position="815"/>
    </location>
</feature>
<feature type="compositionally biased region" description="Polar residues" evidence="5">
    <location>
        <begin position="1244"/>
        <end position="1270"/>
    </location>
</feature>
<feature type="modified residue" description="Phosphothreonine" evidence="28">
    <location>
        <position position="186"/>
    </location>
</feature>
<feature type="modified residue" description="Phosphoserine" evidence="2">
    <location>
        <position position="381"/>
    </location>
</feature>
<feature type="modified residue" description="Phosphoserine" evidence="27">
    <location>
        <position position="399"/>
    </location>
</feature>
<feature type="modified residue" description="Phosphoserine" evidence="27">
    <location>
        <position position="443"/>
    </location>
</feature>
<feature type="modified residue" description="Phosphoserine" evidence="28">
    <location>
        <position position="629"/>
    </location>
</feature>
<feature type="modified residue" description="Phosphoserine" evidence="3">
    <location>
        <position position="1203"/>
    </location>
</feature>
<feature type="modified residue" description="Phosphoserine" evidence="26">
    <location>
        <position position="1224"/>
    </location>
</feature>
<feature type="modified residue" description="Phosphoserine" evidence="28">
    <location>
        <position position="1245"/>
    </location>
</feature>
<feature type="modified residue" description="Phosphoserine" evidence="2">
    <location>
        <position position="1255"/>
    </location>
</feature>
<feature type="modified residue" description="Phosphoserine" evidence="3">
    <location>
        <position position="1259"/>
    </location>
</feature>
<feature type="modified residue" description="Phosphoserine" evidence="2">
    <location>
        <position position="1261"/>
    </location>
</feature>
<feature type="modified residue" description="Phosphoserine" evidence="25">
    <location>
        <position position="1264"/>
    </location>
</feature>
<feature type="modified residue" description="Phosphoserine" evidence="25 26 27">
    <location>
        <position position="1268"/>
    </location>
</feature>
<feature type="splice variant" id="VSP_028270" description="In isoform 4." evidence="22">
    <location>
        <begin position="1"/>
        <end position="928"/>
    </location>
</feature>
<feature type="splice variant" id="VSP_044849" description="In isoform 7." evidence="19">
    <location>
        <begin position="1"/>
        <end position="855"/>
    </location>
</feature>
<feature type="splice variant" id="VSP_028271" description="In isoform 3." evidence="18 19 20 21">
    <location>
        <begin position="1"/>
        <end position="834"/>
    </location>
</feature>
<feature type="splice variant" id="VSP_028272" description="In isoform 6." evidence="19">
    <location>
        <begin position="1"/>
        <end position="753"/>
    </location>
</feature>
<feature type="splice variant" id="VSP_028273" description="In isoform 6." evidence="19">
    <original>QRIRRVSSSGKPTSLKTAQSSWVNLPRPLPKSKASLKSPALRRTGSTPSIASTHSELSTYSNNS</original>
    <variation>MTVPGGFRSCTETDISSKIFINSTLTPPAGSERHYDATLLTLLVVGSYSLCIIPLLATFTGKKT</variation>
    <location>
        <begin position="754"/>
        <end position="817"/>
    </location>
</feature>
<feature type="splice variant" id="VSP_028274" description="In isoform 2." evidence="23">
    <original>GKPTSLKTAQSSWVNLPRPLPKSKASLKSPALRRTGSTPSIASTHSELSTYSNNS</original>
    <variation>A</variation>
    <location>
        <begin position="763"/>
        <end position="817"/>
    </location>
</feature>
<feature type="splice variant" id="VSP_028275" description="In isoform 5." evidence="22">
    <original>GKPTSLKT</original>
    <variation>VLPKAAFS</variation>
    <location>
        <begin position="763"/>
        <end position="770"/>
    </location>
</feature>
<feature type="splice variant" id="VSP_028276" description="In isoform 5." evidence="22">
    <location>
        <begin position="771"/>
        <end position="1270"/>
    </location>
</feature>
<feature type="splice variant" id="VSP_028277" description="In isoform 3." evidence="18 19 20 21">
    <original>QNGSSGSFYLKPLVSRAHVHLMKTPPKGPSRKNLFTALNA</original>
    <variation>MLLSPKFSLSTIHIRLTAKGLLRNLRLPSGFRRSTVVFHT</variation>
    <location>
        <begin position="835"/>
        <end position="874"/>
    </location>
</feature>
<feature type="splice variant" id="VSP_028278" description="In isoform 4." evidence="22">
    <original>GNTKFEALTVVIQHLLSE</original>
    <variation>MGCPSSKLCLYSPCAATR</variation>
    <location>
        <begin position="929"/>
        <end position="946"/>
    </location>
</feature>
<feature type="sequence variant" id="VAR_035173" description="In HCC; dbSNP:rs61733703." evidence="11">
    <original>Q</original>
    <variation>K</variation>
    <location>
        <position position="75"/>
    </location>
</feature>
<feature type="sequence variant" id="VAR_035174" description="In dbSNP:rs3739407." evidence="9 11 14 16 17">
    <original>C</original>
    <variation>R</variation>
    <location>
        <position position="148"/>
    </location>
</feature>
<feature type="sequence variant" id="VAR_035175" description="In HNSCC cell lines; dbSNP:rs141609607." evidence="14">
    <original>T</original>
    <variation>S</variation>
    <location>
        <position position="186"/>
    </location>
</feature>
<feature type="sequence variant" id="VAR_035176" description="In dbSNP:rs61733694." evidence="11">
    <original>T</original>
    <variation>M</variation>
    <location>
        <position position="425"/>
    </location>
</feature>
<feature type="sequence variant" id="VAR_035177" description="In dbSNP:rs17690844." evidence="11 14">
    <original>K</original>
    <variation>T</variation>
    <location>
        <position position="453"/>
    </location>
</feature>
<feature type="sequence variant" id="VAR_035178" description="In HCC." evidence="11">
    <original>A</original>
    <variation>S</variation>
    <location>
        <position position="563"/>
    </location>
</feature>
<feature type="sequence variant" id="VAR_035179" description="In dbSNP:rs209569." evidence="11 17">
    <original>H</original>
    <variation>R</variation>
    <location>
        <position position="575"/>
    </location>
</feature>
<feature type="sequence variant" id="VAR_035180" description="In HCC; dbSNP:rs187103704." evidence="11">
    <original>N</original>
    <variation>H</variation>
    <location>
        <position position="873"/>
    </location>
</feature>
<feature type="sequence variant" id="VAR_035181" description="In dbSNP:rs61748836." evidence="11">
    <original>K</original>
    <variation>T</variation>
    <location>
        <position position="911"/>
    </location>
</feature>
<feature type="sequence variant" id="VAR_035182" description="In dbSNP:rs17853231." evidence="9">
    <original>K</original>
    <variation>T</variation>
    <location>
        <position position="1063"/>
    </location>
</feature>
<feature type="sequence variant" id="VAR_035183" description="In dbSNP:rs61733705." evidence="11">
    <original>E</original>
    <variation>Q</variation>
    <location>
        <position position="1105"/>
    </location>
</feature>
<feature type="sequence variant" id="VAR_035184" description="In HCC; dbSNP:rs567116808." evidence="11">
    <original>Q</original>
    <variation>R</variation>
    <location>
        <position position="1201"/>
    </location>
</feature>
<feature type="sequence conflict" description="In Ref. 5; CAB50791." evidence="24" ref="5">
    <original>C</original>
    <variation>G</variation>
    <location>
        <position position="266"/>
    </location>
</feature>
<feature type="sequence conflict" description="In Ref. 4; BAG37243." evidence="24" ref="4">
    <original>F</original>
    <variation>L</variation>
    <location>
        <position position="918"/>
    </location>
</feature>
<feature type="sequence conflict" description="In Ref. 5; CAH56128." evidence="24" ref="5">
    <original>E</original>
    <variation>G</variation>
    <location>
        <position position="999"/>
    </location>
</feature>
<feature type="sequence conflict" description="In Ref. 4; BAB14894." evidence="24" ref="4">
    <original>I</original>
    <variation>T</variation>
    <location>
        <position position="1149"/>
    </location>
</feature>
<sequence>MTDDNSDDKIEDELQTFFTSDKDGNTHAYNPKSPPTQNSSASSVNWNSANPDDMVVDYETDPAVVTGENISLSLQGVEVFGHEKSSSDFISKQVLDMHKDSICQCPALVGTEKPKYLQHSCHSLEAVEGQSVEPSLPFVWKPNDNLNCAGYCDALELNQTFDMTVDKVNCTFISHHAIGKSQSFHTAGSLPPTGRRSGSTSSLSYSTWTSSHSDKTHARETTYDRESFENPQVTPSEAQDMTYTAFSDVVMQSEVFVSDIGNQCACSSGKVTSEYTDGSQQRLVGEKETQALTPVSDGMEVPNDSALQEFFCLSHDESNSEPHSQSSYRHKEMGQNLRETVSYCLIDDECPLMVPAFDKSEAQVLNPEHKVTETEDTQMVSKGKDLGTQNHTSELILSSPPGQKVGSSFGLTWDANDMVISTDKTMCMSTPVLEPTKVTFSVSPIEATEKCKKVEKGNRGLKNIPDSKEAPVNLCKPSLGKSTIKTNTPIGCKVRKTEIISYPRPNFKNVKAKVMSRAVLQPKDAALSKVTPRPQQTSASSPSSVNSRQQTVLSRTPRSDLNADKKAEILINKTHKQQFNKLITSQAVHVTTHSKNASHRVPRTTSAVKSNQEDVDKASSSNSACETGSVSALFQKIKGILPVKMESAECLEMTYVPNIDRISPEKKGEKENGTSMEKQELKQEIMNETFEYGSLFLGSASKTTTTSGRNISKPDSCGLRQIAAPKAKVGPPVSCLRRNSDNRNPSADRAVSPQRIRRVSSSGKPTSLKTAQSSWVNLPRPLPKSKASLKSPALRRTGSTPSIASTHSELSTYSNNSGNAAVIKYEEKPPKPAFQNGSSGSFYLKPLVSRAHVHLMKTPPKGPSRKNLFTALNAVEKSRQKNPRSLCIQPQTAPDALPPEKTLELTQYKTKCENQSGFILQLKQLLACGNTKFEALTVVIQHLLSEREEALKQHKTLSQELVNLRGELVTASTTCEKLEKARNELQTVYEAFVQQHQAEKTERENRLKEFYTREYEKLRDTYIEEAEKYKMQLQEQFDNLNAAHETSKLEIEASHSEKLELLKKAYEASLSEIKKGHEIEKKSLEDLLSEKQESLEKQINDLKSENDALNEKLKSEEQKRRAREKANLKNPQIMYLEQELESLKAVLEIKNEKLHQQDIKLMKMEKLVDNNTALVDKLKRFQQENEELKARMDKHMAISRQLSTEQAVLQESLEKESKVNKRLSMENEELLWKLHNGDLCSPKRSPTSSAIPLQSPRNSGSFPSPSISPR</sequence>
<accession>Q9ULD2</accession>
<accession>A8K135</accession>
<accession>B2RBJ6</accession>
<accession>B3KWJ9</accession>
<accession>B4DH03</accession>
<accession>B9EGA1</accession>
<accession>D3DSP8</accession>
<accession>Q63HJ6</accession>
<accession>Q659F4</accession>
<accession>Q6PK49</accession>
<accession>Q6URW7</accession>
<accession>Q8N4M6</accession>
<accession>Q8WTT9</accession>
<accession>Q9H7T2</accession>
<gene>
    <name type="primary">MTUS1</name>
    <name type="synonym">ATBP</name>
    <name type="synonym">ATIP</name>
    <name type="synonym">GK1</name>
    <name type="synonym">KIAA1288</name>
    <name type="synonym">MTSG1</name>
</gene>
<reference key="1">
    <citation type="journal article" date="2000" name="J. Hum. Genet.">
        <title>Molecular cloning and characterization of two novel genes on chromosome 8p21.3.</title>
        <authorList>
            <person name="Kinjo T."/>
            <person name="Isomura M."/>
            <person name="Iwamasa T."/>
            <person name="Nakamura Y."/>
        </authorList>
    </citation>
    <scope>NUCLEOTIDE SEQUENCE [MRNA] (ISOFORM 1)</scope>
    <scope>TISSUE SPECIFICITY</scope>
    <scope>SUBCELLULAR LOCATION</scope>
</reference>
<reference key="2">
    <citation type="journal article" date="2003" name="FASEB J.">
        <title>Identification of a new tumor suppressor gene located at chromosome 8p21.3-22.</title>
        <authorList>
            <person name="Seibold S."/>
            <person name="Rudroff C."/>
            <person name="Weber M."/>
            <person name="Galle J."/>
            <person name="Wanner C."/>
            <person name="Marx M."/>
        </authorList>
    </citation>
    <scope>NUCLEOTIDE SEQUENCE [MRNA] (ISOFORM 3)</scope>
    <scope>FUNCTION</scope>
    <scope>TISSUE SPECIFICITY</scope>
    <scope>SUBCELLULAR LOCATION</scope>
</reference>
<reference key="3">
    <citation type="journal article" date="2004" name="J. Biol. Chem.">
        <title>Trans-inactivation of receptor tyrosine kinases by novel angiotensin II AT2 receptor-interacting protein, ATIP.</title>
        <authorList>
            <person name="Nouet S."/>
            <person name="Amzallag N."/>
            <person name="Li J.-M."/>
            <person name="Louis S."/>
            <person name="Seitz I."/>
            <person name="Cui T.-X."/>
            <person name="Alleaume A.-M."/>
            <person name="Di Benedetto M."/>
            <person name="Boden C."/>
            <person name="Masson M."/>
            <person name="Strosberg A.D."/>
            <person name="Horiuchi M."/>
            <person name="Couraud P.-O."/>
            <person name="Nahmias C."/>
        </authorList>
    </citation>
    <scope>NUCLEOTIDE SEQUENCE [MRNA] (ISOFORM 3)</scope>
    <scope>ALTERNATIVE SPLICING (ISOFORMS 1; 5 AND 6)</scope>
    <scope>SUBUNIT</scope>
    <scope>TISSUE SPECIFICITY</scope>
    <source>
        <tissue>Lung</tissue>
    </source>
</reference>
<reference key="4">
    <citation type="journal article" date="2004" name="Nat. Genet.">
        <title>Complete sequencing and characterization of 21,243 full-length human cDNAs.</title>
        <authorList>
            <person name="Ota T."/>
            <person name="Suzuki Y."/>
            <person name="Nishikawa T."/>
            <person name="Otsuki T."/>
            <person name="Sugiyama T."/>
            <person name="Irie R."/>
            <person name="Wakamatsu A."/>
            <person name="Hayashi K."/>
            <person name="Sato H."/>
            <person name="Nagai K."/>
            <person name="Kimura K."/>
            <person name="Makita H."/>
            <person name="Sekine M."/>
            <person name="Obayashi M."/>
            <person name="Nishi T."/>
            <person name="Shibahara T."/>
            <person name="Tanaka T."/>
            <person name="Ishii S."/>
            <person name="Yamamoto J."/>
            <person name="Saito K."/>
            <person name="Kawai Y."/>
            <person name="Isono Y."/>
            <person name="Nakamura Y."/>
            <person name="Nagahari K."/>
            <person name="Murakami K."/>
            <person name="Yasuda T."/>
            <person name="Iwayanagi T."/>
            <person name="Wagatsuma M."/>
            <person name="Shiratori A."/>
            <person name="Sudo H."/>
            <person name="Hosoiri T."/>
            <person name="Kaku Y."/>
            <person name="Kodaira H."/>
            <person name="Kondo H."/>
            <person name="Sugawara M."/>
            <person name="Takahashi M."/>
            <person name="Kanda K."/>
            <person name="Yokoi T."/>
            <person name="Furuya T."/>
            <person name="Kikkawa E."/>
            <person name="Omura Y."/>
            <person name="Abe K."/>
            <person name="Kamihara K."/>
            <person name="Katsuta N."/>
            <person name="Sato K."/>
            <person name="Tanikawa M."/>
            <person name="Yamazaki M."/>
            <person name="Ninomiya K."/>
            <person name="Ishibashi T."/>
            <person name="Yamashita H."/>
            <person name="Murakawa K."/>
            <person name="Fujimori K."/>
            <person name="Tanai H."/>
            <person name="Kimata M."/>
            <person name="Watanabe M."/>
            <person name="Hiraoka S."/>
            <person name="Chiba Y."/>
            <person name="Ishida S."/>
            <person name="Ono Y."/>
            <person name="Takiguchi S."/>
            <person name="Watanabe S."/>
            <person name="Yosida M."/>
            <person name="Hotuta T."/>
            <person name="Kusano J."/>
            <person name="Kanehori K."/>
            <person name="Takahashi-Fujii A."/>
            <person name="Hara H."/>
            <person name="Tanase T.-O."/>
            <person name="Nomura Y."/>
            <person name="Togiya S."/>
            <person name="Komai F."/>
            <person name="Hara R."/>
            <person name="Takeuchi K."/>
            <person name="Arita M."/>
            <person name="Imose N."/>
            <person name="Musashino K."/>
            <person name="Yuuki H."/>
            <person name="Oshima A."/>
            <person name="Sasaki N."/>
            <person name="Aotsuka S."/>
            <person name="Yoshikawa Y."/>
            <person name="Matsunawa H."/>
            <person name="Ichihara T."/>
            <person name="Shiohata N."/>
            <person name="Sano S."/>
            <person name="Moriya S."/>
            <person name="Momiyama H."/>
            <person name="Satoh N."/>
            <person name="Takami S."/>
            <person name="Terashima Y."/>
            <person name="Suzuki O."/>
            <person name="Nakagawa S."/>
            <person name="Senoh A."/>
            <person name="Mizoguchi H."/>
            <person name="Goto Y."/>
            <person name="Shimizu F."/>
            <person name="Wakebe H."/>
            <person name="Hishigaki H."/>
            <person name="Watanabe T."/>
            <person name="Sugiyama A."/>
            <person name="Takemoto M."/>
            <person name="Kawakami B."/>
            <person name="Yamazaki M."/>
            <person name="Watanabe K."/>
            <person name="Kumagai A."/>
            <person name="Itakura S."/>
            <person name="Fukuzumi Y."/>
            <person name="Fujimori Y."/>
            <person name="Komiyama M."/>
            <person name="Tashiro H."/>
            <person name="Tanigami A."/>
            <person name="Fujiwara T."/>
            <person name="Ono T."/>
            <person name="Yamada K."/>
            <person name="Fujii Y."/>
            <person name="Ozaki K."/>
            <person name="Hirao M."/>
            <person name="Ohmori Y."/>
            <person name="Kawabata A."/>
            <person name="Hikiji T."/>
            <person name="Kobatake N."/>
            <person name="Inagaki H."/>
            <person name="Ikema Y."/>
            <person name="Okamoto S."/>
            <person name="Okitani R."/>
            <person name="Kawakami T."/>
            <person name="Noguchi S."/>
            <person name="Itoh T."/>
            <person name="Shigeta K."/>
            <person name="Senba T."/>
            <person name="Matsumura K."/>
            <person name="Nakajima Y."/>
            <person name="Mizuno T."/>
            <person name="Morinaga M."/>
            <person name="Sasaki M."/>
            <person name="Togashi T."/>
            <person name="Oyama M."/>
            <person name="Hata H."/>
            <person name="Watanabe M."/>
            <person name="Komatsu T."/>
            <person name="Mizushima-Sugano J."/>
            <person name="Satoh T."/>
            <person name="Shirai Y."/>
            <person name="Takahashi Y."/>
            <person name="Nakagawa K."/>
            <person name="Okumura K."/>
            <person name="Nagase T."/>
            <person name="Nomura N."/>
            <person name="Kikuchi H."/>
            <person name="Masuho Y."/>
            <person name="Yamashita R."/>
            <person name="Nakai K."/>
            <person name="Yada T."/>
            <person name="Nakamura Y."/>
            <person name="Ohara O."/>
            <person name="Isogai T."/>
            <person name="Sugano S."/>
        </authorList>
    </citation>
    <scope>NUCLEOTIDE SEQUENCE [LARGE SCALE MRNA] (ISOFORMS 3; 6 AND 7)</scope>
    <scope>NUCLEOTIDE SEQUENCE [LARGE SCALE MRNA] OF 875-1270 (ISOFORM 1)</scope>
    <source>
        <tissue>Brain</tissue>
        <tissue>Fetal brain</tissue>
        <tissue>Placenta</tissue>
    </source>
</reference>
<reference key="5">
    <citation type="journal article" date="2007" name="BMC Genomics">
        <title>The full-ORF clone resource of the German cDNA consortium.</title>
        <authorList>
            <person name="Bechtel S."/>
            <person name="Rosenfelder H."/>
            <person name="Duda A."/>
            <person name="Schmidt C.P."/>
            <person name="Ernst U."/>
            <person name="Wellenreuther R."/>
            <person name="Mehrle A."/>
            <person name="Schuster C."/>
            <person name="Bahr A."/>
            <person name="Bloecker H."/>
            <person name="Heubner D."/>
            <person name="Hoerlein A."/>
            <person name="Michel G."/>
            <person name="Wedler H."/>
            <person name="Koehrer K."/>
            <person name="Ottenwaelder B."/>
            <person name="Poustka A."/>
            <person name="Wiemann S."/>
            <person name="Schupp I."/>
        </authorList>
    </citation>
    <scope>NUCLEOTIDE SEQUENCE [LARGE SCALE MRNA] (ISOFORM 4)</scope>
    <scope>NUCLEOTIDE SEQUENCE [LARGE SCALE MRNA] OF 266-1270 (ISOFORM 5)</scope>
    <source>
        <tissue>Salivary gland</tissue>
        <tissue>Uterus</tissue>
    </source>
</reference>
<reference key="6">
    <citation type="journal article" date="2006" name="Nature">
        <title>DNA sequence and analysis of human chromosome 8.</title>
        <authorList>
            <person name="Nusbaum C."/>
            <person name="Mikkelsen T.S."/>
            <person name="Zody M.C."/>
            <person name="Asakawa S."/>
            <person name="Taudien S."/>
            <person name="Garber M."/>
            <person name="Kodira C.D."/>
            <person name="Schueler M.G."/>
            <person name="Shimizu A."/>
            <person name="Whittaker C.A."/>
            <person name="Chang J.L."/>
            <person name="Cuomo C.A."/>
            <person name="Dewar K."/>
            <person name="FitzGerald M.G."/>
            <person name="Yang X."/>
            <person name="Allen N.R."/>
            <person name="Anderson S."/>
            <person name="Asakawa T."/>
            <person name="Blechschmidt K."/>
            <person name="Bloom T."/>
            <person name="Borowsky M.L."/>
            <person name="Butler J."/>
            <person name="Cook A."/>
            <person name="Corum B."/>
            <person name="DeArellano K."/>
            <person name="DeCaprio D."/>
            <person name="Dooley K.T."/>
            <person name="Dorris L. III"/>
            <person name="Engels R."/>
            <person name="Gloeckner G."/>
            <person name="Hafez N."/>
            <person name="Hagopian D.S."/>
            <person name="Hall J.L."/>
            <person name="Ishikawa S.K."/>
            <person name="Jaffe D.B."/>
            <person name="Kamat A."/>
            <person name="Kudoh J."/>
            <person name="Lehmann R."/>
            <person name="Lokitsang T."/>
            <person name="Macdonald P."/>
            <person name="Major J.E."/>
            <person name="Matthews C.D."/>
            <person name="Mauceli E."/>
            <person name="Menzel U."/>
            <person name="Mihalev A.H."/>
            <person name="Minoshima S."/>
            <person name="Murayama Y."/>
            <person name="Naylor J.W."/>
            <person name="Nicol R."/>
            <person name="Nguyen C."/>
            <person name="O'Leary S.B."/>
            <person name="O'Neill K."/>
            <person name="Parker S.C.J."/>
            <person name="Polley A."/>
            <person name="Raymond C.K."/>
            <person name="Reichwald K."/>
            <person name="Rodriguez J."/>
            <person name="Sasaki T."/>
            <person name="Schilhabel M."/>
            <person name="Siddiqui R."/>
            <person name="Smith C.L."/>
            <person name="Sneddon T.P."/>
            <person name="Talamas J.A."/>
            <person name="Tenzin P."/>
            <person name="Topham K."/>
            <person name="Venkataraman V."/>
            <person name="Wen G."/>
            <person name="Yamazaki S."/>
            <person name="Young S.K."/>
            <person name="Zeng Q."/>
            <person name="Zimmer A.R."/>
            <person name="Rosenthal A."/>
            <person name="Birren B.W."/>
            <person name="Platzer M."/>
            <person name="Shimizu N."/>
            <person name="Lander E.S."/>
        </authorList>
    </citation>
    <scope>NUCLEOTIDE SEQUENCE [LARGE SCALE GENOMIC DNA]</scope>
</reference>
<reference key="7">
    <citation type="submission" date="2005-09" db="EMBL/GenBank/DDBJ databases">
        <authorList>
            <person name="Mural R.J."/>
            <person name="Istrail S."/>
            <person name="Sutton G.G."/>
            <person name="Florea L."/>
            <person name="Halpern A.L."/>
            <person name="Mobarry C.M."/>
            <person name="Lippert R."/>
            <person name="Walenz B."/>
            <person name="Shatkay H."/>
            <person name="Dew I."/>
            <person name="Miller J.R."/>
            <person name="Flanigan M.J."/>
            <person name="Edwards N.J."/>
            <person name="Bolanos R."/>
            <person name="Fasulo D."/>
            <person name="Halldorsson B.V."/>
            <person name="Hannenhalli S."/>
            <person name="Turner R."/>
            <person name="Yooseph S."/>
            <person name="Lu F."/>
            <person name="Nusskern D.R."/>
            <person name="Shue B.C."/>
            <person name="Zheng X.H."/>
            <person name="Zhong F."/>
            <person name="Delcher A.L."/>
            <person name="Huson D.H."/>
            <person name="Kravitz S.A."/>
            <person name="Mouchard L."/>
            <person name="Reinert K."/>
            <person name="Remington K.A."/>
            <person name="Clark A.G."/>
            <person name="Waterman M.S."/>
            <person name="Eichler E.E."/>
            <person name="Adams M.D."/>
            <person name="Hunkapiller M.W."/>
            <person name="Myers E.W."/>
            <person name="Venter J.C."/>
        </authorList>
    </citation>
    <scope>NUCLEOTIDE SEQUENCE [LARGE SCALE GENOMIC DNA]</scope>
    <scope>VARIANT ARG-148</scope>
</reference>
<reference key="8">
    <citation type="journal article" date="2004" name="Genome Res.">
        <title>The status, quality, and expansion of the NIH full-length cDNA project: the Mammalian Gene Collection (MGC).</title>
        <authorList>
            <consortium name="The MGC Project Team"/>
        </authorList>
    </citation>
    <scope>NUCLEOTIDE SEQUENCE [LARGE SCALE MRNA] (ISOFORMS 1 AND 3)</scope>
    <scope>VARIANTS ARG-148 AND THR-1063</scope>
    <source>
        <tissue>Ovary</tissue>
        <tissue>Skin</tissue>
        <tissue>Testis</tissue>
    </source>
</reference>
<reference key="9">
    <citation type="submission" date="2003-08" db="EMBL/GenBank/DDBJ databases">
        <title>Differential expression in normal trophoblast and gestational tumors.</title>
        <authorList>
            <person name="Abadie P.A."/>
            <person name="Genti-Raimondi S."/>
        </authorList>
    </citation>
    <scope>NUCLEOTIDE SEQUENCE [MRNA] OF 1-891 (ISOFORM 2)</scope>
    <scope>VARIANTS ARG-148 AND ARG-575</scope>
</reference>
<reference key="10">
    <citation type="journal article" date="1999" name="DNA Res.">
        <title>Prediction of the coding sequences of unidentified human genes. XV. The complete sequences of 100 new cDNA clones from brain which code for large proteins in vitro.</title>
        <authorList>
            <person name="Nagase T."/>
            <person name="Ishikawa K."/>
            <person name="Kikuno R."/>
            <person name="Hirosawa M."/>
            <person name="Nomura N."/>
            <person name="Ohara O."/>
        </authorList>
    </citation>
    <scope>NUCLEOTIDE SEQUENCE [LARGE SCALE MRNA] OF 26-1270 (ISOFORM 1)</scope>
    <source>
        <tissue>Brain</tissue>
    </source>
</reference>
<reference key="11">
    <citation type="journal article" date="2005" name="Cancer">
        <title>Five genes from chromosomal band 8p22 are significantly down-regulated in ovarian carcinoma: N33 and EFA6R have a potential impact on overall survival.</title>
        <authorList>
            <person name="Pils D."/>
            <person name="Horak P."/>
            <person name="Gleiss A."/>
            <person name="Sax C."/>
            <person name="Fabjani G."/>
            <person name="Moebus V.J."/>
            <person name="Zielinski C."/>
            <person name="Reinthaller A."/>
            <person name="Zeillinger R."/>
            <person name="Krainer M."/>
        </authorList>
    </citation>
    <scope>TISSUE SPECIFICITY</scope>
</reference>
<reference key="12">
    <citation type="journal article" date="2006" name="Gene">
        <title>Structural organization and expression of human MTUS1, a candidate 8p22 tumor suppressor gene encoding a family of angiotensin II AT2 receptor-interacting proteins, ATIP.</title>
        <authorList>
            <person name="Di Benedetto M."/>
            <person name="Bieche I."/>
            <person name="Deshayes F."/>
            <person name="Vacher S."/>
            <person name="Nouet S."/>
            <person name="Collura V."/>
            <person name="Seitz I."/>
            <person name="Louis S."/>
            <person name="Pineau P."/>
            <person name="Amsellem-Ouazana D."/>
            <person name="Couraud P.-O."/>
            <person name="Strosberg A.D."/>
            <person name="Stoppa-Lyonnet D."/>
            <person name="Lidereau R."/>
            <person name="Nahmias C."/>
        </authorList>
    </citation>
    <scope>ALTERNATIVE SPLICING</scope>
    <scope>TISSUE SPECIFICITY</scope>
</reference>
<reference key="13">
    <citation type="journal article" date="2006" name="Oncol. Rep.">
        <title>Differential expression in normal-adenoma-carcinoma sequence suggests complex molecular carcinogenesis in colon.</title>
        <authorList>
            <person name="Lee S."/>
            <person name="Bang S."/>
            <person name="Song K."/>
            <person name="Lee I."/>
        </authorList>
    </citation>
    <scope>TISSUE SPECIFICITY</scope>
</reference>
<reference key="14">
    <citation type="journal article" date="2008" name="Proc. Natl. Acad. Sci. U.S.A.">
        <title>A quantitative atlas of mitotic phosphorylation.</title>
        <authorList>
            <person name="Dephoure N."/>
            <person name="Zhou C."/>
            <person name="Villen J."/>
            <person name="Beausoleil S.A."/>
            <person name="Bakalarski C.E."/>
            <person name="Elledge S.J."/>
            <person name="Gygi S.P."/>
        </authorList>
    </citation>
    <scope>IDENTIFICATION BY MASS SPECTROMETRY [LARGE SCALE ANALYSIS]</scope>
    <source>
        <tissue>Cervix carcinoma</tissue>
    </source>
</reference>
<reference key="15">
    <citation type="journal article" date="2009" name="Mol. Cell. Proteomics">
        <title>Large-scale proteomics analysis of the human kinome.</title>
        <authorList>
            <person name="Oppermann F.S."/>
            <person name="Gnad F."/>
            <person name="Olsen J.V."/>
            <person name="Hornberger R."/>
            <person name="Greff Z."/>
            <person name="Keri G."/>
            <person name="Mann M."/>
            <person name="Daub H."/>
        </authorList>
    </citation>
    <scope>IDENTIFICATION BY MASS SPECTROMETRY [LARGE SCALE ANALYSIS]</scope>
</reference>
<reference key="16">
    <citation type="journal article" date="2009" name="PLoS ONE">
        <title>8p22 MTUS1 gene product ATIP3 is a novel anti-mitotic protein underexpressed in invasive breast carcinoma of poor prognosis.</title>
        <authorList>
            <person name="Rodrigues-Ferreira S."/>
            <person name="Di Tommaso A."/>
            <person name="Dimitrov A."/>
            <person name="Cazaubon S."/>
            <person name="Gruel N."/>
            <person name="Colasson H."/>
            <person name="Nicolas A."/>
            <person name="Chaverot N."/>
            <person name="Molinie V."/>
            <person name="Reyal F."/>
            <person name="Sigal-Zafrani B."/>
            <person name="Terris B."/>
            <person name="Delattre O."/>
            <person name="Radvanyi F."/>
            <person name="Perez F."/>
            <person name="Vincent-Salomon A."/>
            <person name="Nahmias C."/>
        </authorList>
    </citation>
    <scope>FUNCTION</scope>
    <scope>ASSOCIATION WITH MICROTUBULES</scope>
    <scope>SUBCELLULAR LOCATION</scope>
    <scope>INDUCTION</scope>
</reference>
<reference key="17">
    <citation type="journal article" date="2009" name="Sci. Signal.">
        <title>Quantitative phosphoproteomic analysis of T cell receptor signaling reveals system-wide modulation of protein-protein interactions.</title>
        <authorList>
            <person name="Mayya V."/>
            <person name="Lundgren D.H."/>
            <person name="Hwang S.-I."/>
            <person name="Rezaul K."/>
            <person name="Wu L."/>
            <person name="Eng J.K."/>
            <person name="Rodionov V."/>
            <person name="Han D.K."/>
        </authorList>
    </citation>
    <scope>PHOSPHORYLATION [LARGE SCALE ANALYSIS] AT SER-1264 AND SER-1268</scope>
    <scope>IDENTIFICATION BY MASS SPECTROMETRY [LARGE SCALE ANALYSIS]</scope>
    <source>
        <tissue>Leukemic T-cell</tissue>
    </source>
</reference>
<reference key="18">
    <citation type="journal article" date="2010" name="Sci. Signal.">
        <title>Quantitative phosphoproteomics reveals widespread full phosphorylation site occupancy during mitosis.</title>
        <authorList>
            <person name="Olsen J.V."/>
            <person name="Vermeulen M."/>
            <person name="Santamaria A."/>
            <person name="Kumar C."/>
            <person name="Miller M.L."/>
            <person name="Jensen L.J."/>
            <person name="Gnad F."/>
            <person name="Cox J."/>
            <person name="Jensen T.S."/>
            <person name="Nigg E.A."/>
            <person name="Brunak S."/>
            <person name="Mann M."/>
        </authorList>
    </citation>
    <scope>PHOSPHORYLATION [LARGE SCALE ANALYSIS] AT SER-1224 AND SER-1268</scope>
    <scope>IDENTIFICATION BY MASS SPECTROMETRY [LARGE SCALE ANALYSIS]</scope>
    <source>
        <tissue>Cervix carcinoma</tissue>
    </source>
</reference>
<reference key="19">
    <citation type="journal article" date="2013" name="J. Proteome Res.">
        <title>Toward a comprehensive characterization of a human cancer cell phosphoproteome.</title>
        <authorList>
            <person name="Zhou H."/>
            <person name="Di Palma S."/>
            <person name="Preisinger C."/>
            <person name="Peng M."/>
            <person name="Polat A.N."/>
            <person name="Heck A.J."/>
            <person name="Mohammed S."/>
        </authorList>
    </citation>
    <scope>PHOSPHORYLATION [LARGE SCALE ANALYSIS] AT SER-399; SER-443 AND SER-1268</scope>
    <scope>IDENTIFICATION BY MASS SPECTROMETRY [LARGE SCALE ANALYSIS]</scope>
    <source>
        <tissue>Cervix carcinoma</tissue>
    </source>
</reference>
<reference key="20">
    <citation type="journal article" date="2014" name="J. Proteomics">
        <title>An enzyme assisted RP-RPLC approach for in-depth analysis of human liver phosphoproteome.</title>
        <authorList>
            <person name="Bian Y."/>
            <person name="Song C."/>
            <person name="Cheng K."/>
            <person name="Dong M."/>
            <person name="Wang F."/>
            <person name="Huang J."/>
            <person name="Sun D."/>
            <person name="Wang L."/>
            <person name="Ye M."/>
            <person name="Zou H."/>
        </authorList>
    </citation>
    <scope>PHOSPHORYLATION [LARGE SCALE ANALYSIS] AT THR-186; SER-629 AND SER-1245</scope>
    <scope>IDENTIFICATION BY MASS SPECTROMETRY [LARGE SCALE ANALYSIS]</scope>
    <source>
        <tissue>Liver</tissue>
    </source>
</reference>
<reference key="21">
    <citation type="journal article" date="2006" name="Mol. Cell. Endocrinol.">
        <title>Mutation analysis of the 8p22 candidate tumor suppressor gene ATIP/MTUS1 in hepatocellular carcinoma.</title>
        <authorList>
            <person name="Di Benedetto M."/>
            <person name="Pineau P."/>
            <person name="Nouet S."/>
            <person name="Berhouet S."/>
            <person name="Seitz I."/>
            <person name="Louis S."/>
            <person name="Dejean A."/>
            <person name="Couraud P.-O."/>
            <person name="Strosberg A.D."/>
            <person name="Stoppa-Lyonnet D."/>
            <person name="Nahmias C."/>
        </authorList>
    </citation>
    <scope>VARIANTS HCC LYS-75; SER-563; HIS-873 AND ARG-1201</scope>
    <scope>VARIANTS ARG-148; MET-425; THR-453; ARG-575; THR-911 AND GLN-1105</scope>
</reference>
<reference key="22">
    <citation type="journal article" date="2007" name="Cancer Genet. Cytogenet.">
        <title>Genomic assessments of the frequent loss of heterozygosity region on 8p21.3 approximately p22 in head and neck squamous cell carcinoma.</title>
        <authorList>
            <person name="Ye H."/>
            <person name="Pungpravat N."/>
            <person name="Huang B.-L."/>
            <person name="Muzio L.L."/>
            <person name="Mariggio M.A."/>
            <person name="Chen Z."/>
            <person name="Wong D.T."/>
            <person name="Zhou X."/>
        </authorList>
    </citation>
    <scope>VARIANTS ARG-148 AND THR-453</scope>
    <scope>VARIANT HNSCC SER-186</scope>
    <scope>TISSUE SPECIFICITY</scope>
</reference>
<protein>
    <recommendedName>
        <fullName>Microtubule-associated tumor suppressor 1</fullName>
    </recommendedName>
    <alternativeName>
        <fullName>AT2 receptor-binding protein</fullName>
    </alternativeName>
    <alternativeName>
        <fullName>Angiotensin-II type 2 receptor-interacting protein</fullName>
    </alternativeName>
    <alternativeName>
        <fullName>Mitochondrial tumor suppressor 1</fullName>
    </alternativeName>
</protein>
<proteinExistence type="evidence at protein level"/>